<feature type="chain" id="PRO_1000070350" description="Ribonuclease Z">
    <location>
        <begin position="1"/>
        <end position="321"/>
    </location>
</feature>
<feature type="active site" description="Proton acceptor" evidence="1">
    <location>
        <position position="66"/>
    </location>
</feature>
<feature type="binding site" evidence="1">
    <location>
        <position position="62"/>
    </location>
    <ligand>
        <name>Zn(2+)</name>
        <dbReference type="ChEBI" id="CHEBI:29105"/>
        <label>1</label>
        <note>catalytic</note>
    </ligand>
</feature>
<feature type="binding site" evidence="1">
    <location>
        <position position="64"/>
    </location>
    <ligand>
        <name>Zn(2+)</name>
        <dbReference type="ChEBI" id="CHEBI:29105"/>
        <label>1</label>
        <note>catalytic</note>
    </ligand>
</feature>
<feature type="binding site" evidence="1">
    <location>
        <position position="66"/>
    </location>
    <ligand>
        <name>Zn(2+)</name>
        <dbReference type="ChEBI" id="CHEBI:29105"/>
        <label>2</label>
        <note>catalytic</note>
    </ligand>
</feature>
<feature type="binding site" evidence="1">
    <location>
        <position position="67"/>
    </location>
    <ligand>
        <name>Zn(2+)</name>
        <dbReference type="ChEBI" id="CHEBI:29105"/>
        <label>2</label>
        <note>catalytic</note>
    </ligand>
</feature>
<feature type="binding site" evidence="1">
    <location>
        <position position="139"/>
    </location>
    <ligand>
        <name>Zn(2+)</name>
        <dbReference type="ChEBI" id="CHEBI:29105"/>
        <label>1</label>
        <note>catalytic</note>
    </ligand>
</feature>
<feature type="binding site" evidence="1">
    <location>
        <position position="210"/>
    </location>
    <ligand>
        <name>Zn(2+)</name>
        <dbReference type="ChEBI" id="CHEBI:29105"/>
        <label>1</label>
        <note>catalytic</note>
    </ligand>
</feature>
<feature type="binding site" evidence="1">
    <location>
        <position position="210"/>
    </location>
    <ligand>
        <name>Zn(2+)</name>
        <dbReference type="ChEBI" id="CHEBI:29105"/>
        <label>2</label>
        <note>catalytic</note>
    </ligand>
</feature>
<feature type="binding site" evidence="1">
    <location>
        <position position="268"/>
    </location>
    <ligand>
        <name>Zn(2+)</name>
        <dbReference type="ChEBI" id="CHEBI:29105"/>
        <label>2</label>
        <note>catalytic</note>
    </ligand>
</feature>
<protein>
    <recommendedName>
        <fullName evidence="1">Ribonuclease Z</fullName>
        <shortName evidence="1">RNase Z</shortName>
        <ecNumber evidence="1">3.1.26.11</ecNumber>
    </recommendedName>
    <alternativeName>
        <fullName evidence="1">tRNA 3 endonuclease</fullName>
    </alternativeName>
    <alternativeName>
        <fullName evidence="1">tRNase Z</fullName>
    </alternativeName>
</protein>
<accession>Q118J2</accession>
<dbReference type="EC" id="3.1.26.11" evidence="1"/>
<dbReference type="EMBL" id="CP000393">
    <property type="protein sequence ID" value="ABG50082.1"/>
    <property type="molecule type" value="Genomic_DNA"/>
</dbReference>
<dbReference type="RefSeq" id="WP_011610475.1">
    <property type="nucleotide sequence ID" value="NC_008312.1"/>
</dbReference>
<dbReference type="SMR" id="Q118J2"/>
<dbReference type="STRING" id="203124.Tery_0641"/>
<dbReference type="KEGG" id="ter:Tery_0641"/>
<dbReference type="eggNOG" id="COG1234">
    <property type="taxonomic scope" value="Bacteria"/>
</dbReference>
<dbReference type="HOGENOM" id="CLU_031317_2_0_3"/>
<dbReference type="OrthoDB" id="9800940at2"/>
<dbReference type="GO" id="GO:0042781">
    <property type="term" value="F:3'-tRNA processing endoribonuclease activity"/>
    <property type="evidence" value="ECO:0007669"/>
    <property type="project" value="UniProtKB-UniRule"/>
</dbReference>
<dbReference type="GO" id="GO:0008270">
    <property type="term" value="F:zinc ion binding"/>
    <property type="evidence" value="ECO:0007669"/>
    <property type="project" value="UniProtKB-UniRule"/>
</dbReference>
<dbReference type="CDD" id="cd07717">
    <property type="entry name" value="RNaseZ_ZiPD-like_MBL-fold"/>
    <property type="match status" value="1"/>
</dbReference>
<dbReference type="FunFam" id="3.60.15.10:FF:000002">
    <property type="entry name" value="Ribonuclease Z"/>
    <property type="match status" value="1"/>
</dbReference>
<dbReference type="Gene3D" id="3.60.15.10">
    <property type="entry name" value="Ribonuclease Z/Hydroxyacylglutathione hydrolase-like"/>
    <property type="match status" value="1"/>
</dbReference>
<dbReference type="HAMAP" id="MF_01818">
    <property type="entry name" value="RNase_Z_BN"/>
    <property type="match status" value="1"/>
</dbReference>
<dbReference type="InterPro" id="IPR001279">
    <property type="entry name" value="Metallo-B-lactamas"/>
</dbReference>
<dbReference type="InterPro" id="IPR036866">
    <property type="entry name" value="RibonucZ/Hydroxyglut_hydro"/>
</dbReference>
<dbReference type="InterPro" id="IPR013471">
    <property type="entry name" value="RNase_Z/BN"/>
</dbReference>
<dbReference type="NCBIfam" id="NF000801">
    <property type="entry name" value="PRK00055.1-3"/>
    <property type="match status" value="1"/>
</dbReference>
<dbReference type="NCBIfam" id="TIGR02651">
    <property type="entry name" value="RNase_Z"/>
    <property type="match status" value="1"/>
</dbReference>
<dbReference type="PANTHER" id="PTHR46018">
    <property type="entry name" value="ZINC PHOSPHODIESTERASE ELAC PROTEIN 1"/>
    <property type="match status" value="1"/>
</dbReference>
<dbReference type="PANTHER" id="PTHR46018:SF2">
    <property type="entry name" value="ZINC PHOSPHODIESTERASE ELAC PROTEIN 1"/>
    <property type="match status" value="1"/>
</dbReference>
<dbReference type="Pfam" id="PF00753">
    <property type="entry name" value="Lactamase_B"/>
    <property type="match status" value="1"/>
</dbReference>
<dbReference type="Pfam" id="PF12706">
    <property type="entry name" value="Lactamase_B_2"/>
    <property type="match status" value="1"/>
</dbReference>
<dbReference type="SUPFAM" id="SSF56281">
    <property type="entry name" value="Metallo-hydrolase/oxidoreductase"/>
    <property type="match status" value="1"/>
</dbReference>
<proteinExistence type="inferred from homology"/>
<gene>
    <name evidence="1" type="primary">rnz</name>
    <name type="ordered locus">Tery_0641</name>
</gene>
<organism>
    <name type="scientific">Trichodesmium erythraeum (strain IMS101)</name>
    <dbReference type="NCBI Taxonomy" id="203124"/>
    <lineage>
        <taxon>Bacteria</taxon>
        <taxon>Bacillati</taxon>
        <taxon>Cyanobacteriota</taxon>
        <taxon>Cyanophyceae</taxon>
        <taxon>Oscillatoriophycideae</taxon>
        <taxon>Oscillatoriales</taxon>
        <taxon>Microcoleaceae</taxon>
        <taxon>Trichodesmium</taxon>
    </lineage>
</organism>
<evidence type="ECO:0000255" key="1">
    <source>
        <dbReference type="HAMAP-Rule" id="MF_01818"/>
    </source>
</evidence>
<reference key="1">
    <citation type="journal article" date="2015" name="Proc. Natl. Acad. Sci. U.S.A.">
        <title>Trichodesmium genome maintains abundant, widespread noncoding DNA in situ, despite oligotrophic lifestyle.</title>
        <authorList>
            <person name="Walworth N."/>
            <person name="Pfreundt U."/>
            <person name="Nelson W.C."/>
            <person name="Mincer T."/>
            <person name="Heidelberg J.F."/>
            <person name="Fu F."/>
            <person name="Waterbury J.B."/>
            <person name="Glavina del Rio T."/>
            <person name="Goodwin L."/>
            <person name="Kyrpides N.C."/>
            <person name="Land M.L."/>
            <person name="Woyke T."/>
            <person name="Hutchins D.A."/>
            <person name="Hess W.R."/>
            <person name="Webb E.A."/>
        </authorList>
    </citation>
    <scope>NUCLEOTIDE SEQUENCE [LARGE SCALE GENOMIC DNA]</scope>
    <source>
        <strain>IMS101</strain>
    </source>
</reference>
<keyword id="KW-0255">Endonuclease</keyword>
<keyword id="KW-0378">Hydrolase</keyword>
<keyword id="KW-0479">Metal-binding</keyword>
<keyword id="KW-0540">Nuclease</keyword>
<keyword id="KW-0819">tRNA processing</keyword>
<keyword id="KW-0862">Zinc</keyword>
<name>RNZ_TRIEI</name>
<comment type="function">
    <text evidence="1">Zinc phosphodiesterase, which displays some tRNA 3'-processing endonuclease activity. Probably involved in tRNA maturation, by removing a 3'-trailer from precursor tRNA.</text>
</comment>
<comment type="catalytic activity">
    <reaction evidence="1">
        <text>Endonucleolytic cleavage of RNA, removing extra 3' nucleotides from tRNA precursor, generating 3' termini of tRNAs. A 3'-hydroxy group is left at the tRNA terminus and a 5'-phosphoryl group is left at the trailer molecule.</text>
        <dbReference type="EC" id="3.1.26.11"/>
    </reaction>
</comment>
<comment type="cofactor">
    <cofactor evidence="1">
        <name>Zn(2+)</name>
        <dbReference type="ChEBI" id="CHEBI:29105"/>
    </cofactor>
    <text evidence="1">Binds 2 Zn(2+) ions.</text>
</comment>
<comment type="subunit">
    <text evidence="1">Homodimer.</text>
</comment>
<comment type="similarity">
    <text evidence="1">Belongs to the RNase Z family.</text>
</comment>
<sequence>MQITFLGTSSGVPTRSRNVSSIALRLPQRAELWLFDCGEGTQHQFLRSDLKVSQLSRIFITHMHGDHVFGLMGLLASCGLGGNVKSVTLYGPPALEDYLQAGLRYSQTHLAYPIKVHKSKPGVIYEDDEYVVSCAYLKHRVTAFGYRVTEKDRPGHFNVEKAKALGIPPGPIYRKLKQGEFVTLPDGRKINGADLCGAPHVGRKFVYCTDTVFCDGAVELSQGADLLVHEATFSHQDAEMAFQRLHSTSTMAAQVALAAGVKHLMMTHFSPRYAPGNSVLLDDLLQEARAIFPNTDMAYDFLSYEIPRWNEVSQLLAKARS</sequence>